<reference key="1">
    <citation type="journal article" date="2009" name="BMC Genomics">
        <title>Pseudogene accumulation in the evolutionary histories of Salmonella enterica serovars Paratyphi A and Typhi.</title>
        <authorList>
            <person name="Holt K.E."/>
            <person name="Thomson N.R."/>
            <person name="Wain J."/>
            <person name="Langridge G.C."/>
            <person name="Hasan R."/>
            <person name="Bhutta Z.A."/>
            <person name="Quail M.A."/>
            <person name="Norbertczak H."/>
            <person name="Walker D."/>
            <person name="Simmonds M."/>
            <person name="White B."/>
            <person name="Bason N."/>
            <person name="Mungall K."/>
            <person name="Dougan G."/>
            <person name="Parkhill J."/>
        </authorList>
    </citation>
    <scope>NUCLEOTIDE SEQUENCE [LARGE SCALE GENOMIC DNA]</scope>
    <source>
        <strain>AKU_12601</strain>
    </source>
</reference>
<dbReference type="EMBL" id="FM200053">
    <property type="protein sequence ID" value="CAR58426.1"/>
    <property type="molecule type" value="Genomic_DNA"/>
</dbReference>
<dbReference type="RefSeq" id="WP_001196660.1">
    <property type="nucleotide sequence ID" value="NC_011147.1"/>
</dbReference>
<dbReference type="SMR" id="B5BAX0"/>
<dbReference type="KEGG" id="sek:SSPA0309"/>
<dbReference type="HOGENOM" id="CLU_005965_2_1_6"/>
<dbReference type="Proteomes" id="UP000001869">
    <property type="component" value="Chromosome"/>
</dbReference>
<dbReference type="GO" id="GO:0005524">
    <property type="term" value="F:ATP binding"/>
    <property type="evidence" value="ECO:0007669"/>
    <property type="project" value="UniProtKB-KW"/>
</dbReference>
<dbReference type="GO" id="GO:0016887">
    <property type="term" value="F:ATP hydrolysis activity"/>
    <property type="evidence" value="ECO:0007669"/>
    <property type="project" value="UniProtKB-UniRule"/>
</dbReference>
<dbReference type="GO" id="GO:0140662">
    <property type="term" value="F:ATP-dependent protein folding chaperone"/>
    <property type="evidence" value="ECO:0007669"/>
    <property type="project" value="InterPro"/>
</dbReference>
<dbReference type="GO" id="GO:0051082">
    <property type="term" value="F:unfolded protein binding"/>
    <property type="evidence" value="ECO:0007669"/>
    <property type="project" value="InterPro"/>
</dbReference>
<dbReference type="GO" id="GO:0016226">
    <property type="term" value="P:iron-sulfur cluster assembly"/>
    <property type="evidence" value="ECO:0007669"/>
    <property type="project" value="InterPro"/>
</dbReference>
<dbReference type="CDD" id="cd10236">
    <property type="entry name" value="ASKHA_NBD_HSP70_HscA"/>
    <property type="match status" value="1"/>
</dbReference>
<dbReference type="FunFam" id="1.20.1270.10:FF:000006">
    <property type="entry name" value="Chaperone protein HscA"/>
    <property type="match status" value="1"/>
</dbReference>
<dbReference type="FunFam" id="3.30.420.40:FF:000046">
    <property type="entry name" value="Chaperone protein HscA"/>
    <property type="match status" value="1"/>
</dbReference>
<dbReference type="FunFam" id="3.90.640.10:FF:000013">
    <property type="entry name" value="Chaperone protein HscA"/>
    <property type="match status" value="1"/>
</dbReference>
<dbReference type="FunFam" id="2.60.34.10:FF:000005">
    <property type="entry name" value="Chaperone protein HscA homolog"/>
    <property type="match status" value="1"/>
</dbReference>
<dbReference type="Gene3D" id="1.20.1270.10">
    <property type="match status" value="1"/>
</dbReference>
<dbReference type="Gene3D" id="3.30.420.40">
    <property type="match status" value="2"/>
</dbReference>
<dbReference type="Gene3D" id="3.90.640.10">
    <property type="entry name" value="Actin, Chain A, domain 4"/>
    <property type="match status" value="1"/>
</dbReference>
<dbReference type="Gene3D" id="2.60.34.10">
    <property type="entry name" value="Substrate Binding Domain Of DNAk, Chain A, domain 1"/>
    <property type="match status" value="1"/>
</dbReference>
<dbReference type="HAMAP" id="MF_00679">
    <property type="entry name" value="HscA"/>
    <property type="match status" value="1"/>
</dbReference>
<dbReference type="InterPro" id="IPR043129">
    <property type="entry name" value="ATPase_NBD"/>
</dbReference>
<dbReference type="InterPro" id="IPR018181">
    <property type="entry name" value="Heat_shock_70_CS"/>
</dbReference>
<dbReference type="InterPro" id="IPR042039">
    <property type="entry name" value="HscA_NBD"/>
</dbReference>
<dbReference type="InterPro" id="IPR029048">
    <property type="entry name" value="HSP70_C_sf"/>
</dbReference>
<dbReference type="InterPro" id="IPR029047">
    <property type="entry name" value="HSP70_peptide-bd_sf"/>
</dbReference>
<dbReference type="InterPro" id="IPR013126">
    <property type="entry name" value="Hsp_70_fam"/>
</dbReference>
<dbReference type="InterPro" id="IPR010236">
    <property type="entry name" value="ISC_FeS_clus_asmbl_HscA"/>
</dbReference>
<dbReference type="NCBIfam" id="TIGR01991">
    <property type="entry name" value="HscA"/>
    <property type="match status" value="1"/>
</dbReference>
<dbReference type="NCBIfam" id="NF003520">
    <property type="entry name" value="PRK05183.1"/>
    <property type="match status" value="1"/>
</dbReference>
<dbReference type="PANTHER" id="PTHR19375">
    <property type="entry name" value="HEAT SHOCK PROTEIN 70KDA"/>
    <property type="match status" value="1"/>
</dbReference>
<dbReference type="Pfam" id="PF00012">
    <property type="entry name" value="HSP70"/>
    <property type="match status" value="1"/>
</dbReference>
<dbReference type="PRINTS" id="PR00301">
    <property type="entry name" value="HEATSHOCK70"/>
</dbReference>
<dbReference type="SUPFAM" id="SSF53067">
    <property type="entry name" value="Actin-like ATPase domain"/>
    <property type="match status" value="2"/>
</dbReference>
<dbReference type="SUPFAM" id="SSF100934">
    <property type="entry name" value="Heat shock protein 70kD (HSP70), C-terminal subdomain"/>
    <property type="match status" value="1"/>
</dbReference>
<dbReference type="SUPFAM" id="SSF100920">
    <property type="entry name" value="Heat shock protein 70kD (HSP70), peptide-binding domain"/>
    <property type="match status" value="1"/>
</dbReference>
<dbReference type="PROSITE" id="PS00297">
    <property type="entry name" value="HSP70_1"/>
    <property type="match status" value="1"/>
</dbReference>
<dbReference type="PROSITE" id="PS00329">
    <property type="entry name" value="HSP70_2"/>
    <property type="match status" value="1"/>
</dbReference>
<dbReference type="PROSITE" id="PS01036">
    <property type="entry name" value="HSP70_3"/>
    <property type="match status" value="1"/>
</dbReference>
<keyword id="KW-0067">ATP-binding</keyword>
<keyword id="KW-0143">Chaperone</keyword>
<keyword id="KW-0547">Nucleotide-binding</keyword>
<accession>B5BAX0</accession>
<proteinExistence type="inferred from homology"/>
<protein>
    <recommendedName>
        <fullName evidence="1">Chaperone protein HscA</fullName>
    </recommendedName>
    <alternativeName>
        <fullName evidence="1">Hsc66</fullName>
    </alternativeName>
</protein>
<gene>
    <name evidence="1" type="primary">hscA</name>
    <name type="ordered locus">SSPA0309</name>
</gene>
<name>HSCA_SALPK</name>
<evidence type="ECO:0000255" key="1">
    <source>
        <dbReference type="HAMAP-Rule" id="MF_00679"/>
    </source>
</evidence>
<sequence length="616" mass="65681">MALLQISEPGLSAAPHQRRLAAGIDLGTTNSLVATVRSGQAETLPDHEGRHLLPSVVHYQQQGHTVGYAARDNAAQDTANTISSVKRMMGRSLADIQARYPHLPYRFKASVNGLPMIDTAAGLLNPVRVSADILKALAARASESLSGELDGVVITVPAYFDDAQRQGTKDAARLAGLHVLRLLNEPTAAAIAYGLDSGKEGVIAVYDLGGGTFDISILRLSRGVFEVLATGGDSALGGDDFDHLLADYIREQAGIADRSDNRVQRELLDAAITAKIALSDADTVRVNVAGWQGEITREQFNDLISALVKRTLLACRRALKDAGVEPQDVLEVVMVGGSTRVPLVRERVGEFFGRTPLTAIDPDKVVAIGAAIQADILVGNKPDSEMLLLDVIPLSLGLETMGGLVEKVIPRNTTIPVARAQDFTTFKDGQTAMSIHVMQGERELVQDCRSLARFALRGIPPLPAGGAHIRVTFQVDADGLLSVTAMEKSTGVEASIQVKPSYGLTDSEIASMIKDSMSFAEQDVKARMLAEQKVEAARVLESLTGALTADAALLSAAERQCIDDAAAHLSAVAQGDDVDAIEQAIKNVDKQTQEFAARRMDQSVRRALKGHSVDEV</sequence>
<comment type="function">
    <text evidence="1">Chaperone involved in the maturation of iron-sulfur cluster-containing proteins. Has a low intrinsic ATPase activity which is markedly stimulated by HscB. Involved in the maturation of IscU.</text>
</comment>
<comment type="similarity">
    <text evidence="1">Belongs to the heat shock protein 70 family.</text>
</comment>
<organism>
    <name type="scientific">Salmonella paratyphi A (strain AKU_12601)</name>
    <dbReference type="NCBI Taxonomy" id="554290"/>
    <lineage>
        <taxon>Bacteria</taxon>
        <taxon>Pseudomonadati</taxon>
        <taxon>Pseudomonadota</taxon>
        <taxon>Gammaproteobacteria</taxon>
        <taxon>Enterobacterales</taxon>
        <taxon>Enterobacteriaceae</taxon>
        <taxon>Salmonella</taxon>
    </lineage>
</organism>
<feature type="chain" id="PRO_1000131692" description="Chaperone protein HscA">
    <location>
        <begin position="1"/>
        <end position="616"/>
    </location>
</feature>